<reference key="1">
    <citation type="journal article" date="1994" name="NeuroReport">
        <title>Primary structure and functional expression of the AMPA/kainate receptor subunit 2 from human brain.</title>
        <authorList>
            <person name="Sun W."/>
            <person name="Ferrer-Montiel A.V."/>
            <person name="Montal M."/>
        </authorList>
    </citation>
    <scope>NUCLEOTIDE SEQUENCE [MRNA] (ISOFORM FLIP)</scope>
    <scope>FUNCTION</scope>
    <scope>SUBUNIT</scope>
    <scope>RNA EDITING OF POSITION 607</scope>
    <source>
        <tissue>Brain</tissue>
    </source>
</reference>
<reference key="2">
    <citation type="journal article" date="2005" name="Nature">
        <title>Generation and annotation of the DNA sequences of human chromosomes 2 and 4.</title>
        <authorList>
            <person name="Hillier L.W."/>
            <person name="Graves T.A."/>
            <person name="Fulton R.S."/>
            <person name="Fulton L.A."/>
            <person name="Pepin K.H."/>
            <person name="Minx P."/>
            <person name="Wagner-McPherson C."/>
            <person name="Layman D."/>
            <person name="Wylie K."/>
            <person name="Sekhon M."/>
            <person name="Becker M.C."/>
            <person name="Fewell G.A."/>
            <person name="Delehaunty K.D."/>
            <person name="Miner T.L."/>
            <person name="Nash W.E."/>
            <person name="Kremitzki C."/>
            <person name="Oddy L."/>
            <person name="Du H."/>
            <person name="Sun H."/>
            <person name="Bradshaw-Cordum H."/>
            <person name="Ali J."/>
            <person name="Carter J."/>
            <person name="Cordes M."/>
            <person name="Harris A."/>
            <person name="Isak A."/>
            <person name="van Brunt A."/>
            <person name="Nguyen C."/>
            <person name="Du F."/>
            <person name="Courtney L."/>
            <person name="Kalicki J."/>
            <person name="Ozersky P."/>
            <person name="Abbott S."/>
            <person name="Armstrong J."/>
            <person name="Belter E.A."/>
            <person name="Caruso L."/>
            <person name="Cedroni M."/>
            <person name="Cotton M."/>
            <person name="Davidson T."/>
            <person name="Desai A."/>
            <person name="Elliott G."/>
            <person name="Erb T."/>
            <person name="Fronick C."/>
            <person name="Gaige T."/>
            <person name="Haakenson W."/>
            <person name="Haglund K."/>
            <person name="Holmes A."/>
            <person name="Harkins R."/>
            <person name="Kim K."/>
            <person name="Kruchowski S.S."/>
            <person name="Strong C.M."/>
            <person name="Grewal N."/>
            <person name="Goyea E."/>
            <person name="Hou S."/>
            <person name="Levy A."/>
            <person name="Martinka S."/>
            <person name="Mead K."/>
            <person name="McLellan M.D."/>
            <person name="Meyer R."/>
            <person name="Randall-Maher J."/>
            <person name="Tomlinson C."/>
            <person name="Dauphin-Kohlberg S."/>
            <person name="Kozlowicz-Reilly A."/>
            <person name="Shah N."/>
            <person name="Swearengen-Shahid S."/>
            <person name="Snider J."/>
            <person name="Strong J.T."/>
            <person name="Thompson J."/>
            <person name="Yoakum M."/>
            <person name="Leonard S."/>
            <person name="Pearman C."/>
            <person name="Trani L."/>
            <person name="Radionenko M."/>
            <person name="Waligorski J.E."/>
            <person name="Wang C."/>
            <person name="Rock S.M."/>
            <person name="Tin-Wollam A.-M."/>
            <person name="Maupin R."/>
            <person name="Latreille P."/>
            <person name="Wendl M.C."/>
            <person name="Yang S.-P."/>
            <person name="Pohl C."/>
            <person name="Wallis J.W."/>
            <person name="Spieth J."/>
            <person name="Bieri T.A."/>
            <person name="Berkowicz N."/>
            <person name="Nelson J.O."/>
            <person name="Osborne J."/>
            <person name="Ding L."/>
            <person name="Meyer R."/>
            <person name="Sabo A."/>
            <person name="Shotland Y."/>
            <person name="Sinha P."/>
            <person name="Wohldmann P.E."/>
            <person name="Cook L.L."/>
            <person name="Hickenbotham M.T."/>
            <person name="Eldred J."/>
            <person name="Williams D."/>
            <person name="Jones T.A."/>
            <person name="She X."/>
            <person name="Ciccarelli F.D."/>
            <person name="Izaurralde E."/>
            <person name="Taylor J."/>
            <person name="Schmutz J."/>
            <person name="Myers R.M."/>
            <person name="Cox D.R."/>
            <person name="Huang X."/>
            <person name="McPherson J.D."/>
            <person name="Mardis E.R."/>
            <person name="Clifton S.W."/>
            <person name="Warren W.C."/>
            <person name="Chinwalla A.T."/>
            <person name="Eddy S.R."/>
            <person name="Marra M.A."/>
            <person name="Ovcharenko I."/>
            <person name="Furey T.S."/>
            <person name="Miller W."/>
            <person name="Eichler E.E."/>
            <person name="Bork P."/>
            <person name="Suyama M."/>
            <person name="Torrents D."/>
            <person name="Waterston R.H."/>
            <person name="Wilson R.K."/>
        </authorList>
    </citation>
    <scope>NUCLEOTIDE SEQUENCE [LARGE SCALE GENOMIC DNA]</scope>
</reference>
<reference key="3">
    <citation type="journal article" date="2004" name="Genome Res.">
        <title>The status, quality, and expansion of the NIH full-length cDNA project: the Mammalian Gene Collection (MGC).</title>
        <authorList>
            <consortium name="The MGC Project Team"/>
        </authorList>
    </citation>
    <scope>NUCLEOTIDE SEQUENCE [LARGE SCALE MRNA] (ISOFORMS FLOP AND 4)</scope>
    <scope>RNA EDITING OF POSITIONS 607 AND 608</scope>
    <source>
        <tissue>Brain</tissue>
    </source>
</reference>
<reference key="4">
    <citation type="journal article" date="1994" name="J. Neurochem.">
        <title>RNA editing of the glutamate receptor subunits GluR2 and GluR6 in human brain tissue.</title>
        <authorList>
            <person name="Paschen W."/>
            <person name="Hedreen J.C."/>
            <person name="Ross C.A."/>
        </authorList>
    </citation>
    <scope>RNA EDITING OF POSITION 607</scope>
</reference>
<reference key="5">
    <citation type="journal article" date="2003" name="Neuron">
        <title>Glutamatergic plasticity by synaptic delivery of GluR-B(long)-containing AMPA receptors.</title>
        <authorList>
            <person name="Kolleker A."/>
            <person name="Zhu J.J."/>
            <person name="Schupp B.J."/>
            <person name="Qin Y."/>
            <person name="Mack V."/>
            <person name="Borchardt T."/>
            <person name="Koehr G."/>
            <person name="Malinow R."/>
            <person name="Seeburg P.H."/>
            <person name="Osten P."/>
        </authorList>
    </citation>
    <scope>FUNCTION</scope>
    <scope>IDENTIFICATION (ISOFORM 3)</scope>
    <scope>SUBUNIT</scope>
</reference>
<reference key="6">
    <citation type="journal article" date="2004" name="J. Biol. Chem.">
        <title>The PDZ domain of PICK1 differentially accepts protein kinase C-alpha and GluR2 as interacting ligands.</title>
        <authorList>
            <person name="Dev K.K."/>
            <person name="Nakanishi S."/>
            <person name="Henley J.M."/>
        </authorList>
    </citation>
    <scope>INTERACTION WITH PICK1</scope>
</reference>
<reference key="7">
    <citation type="journal article" date="2012" name="Proc. Natl. Acad. Sci. U.S.A.">
        <title>Ubiquitin ligase RNF167 regulates AMPA receptor-mediated synaptic transmission.</title>
        <authorList>
            <person name="Lussier M.P."/>
            <person name="Herring B.E."/>
            <person name="Nasu-Nishimura Y."/>
            <person name="Neutzner A."/>
            <person name="Karbowski M."/>
            <person name="Youle R.J."/>
            <person name="Nicoll R.A."/>
            <person name="Roche K.W."/>
        </authorList>
    </citation>
    <scope>UBIQUITINATION</scope>
</reference>
<reference key="8">
    <citation type="journal article" date="2013" name="J. Neurosci.">
        <title>A eukaryotic specific transmembrane segment is required for tetramerization in AMPA receptors.</title>
        <authorList>
            <person name="Salussolia C.L."/>
            <person name="Gan Q."/>
            <person name="Kazi R."/>
            <person name="Singh P."/>
            <person name="Allopenna J."/>
            <person name="Furukawa H."/>
            <person name="Wollmuth L.P."/>
        </authorList>
    </citation>
    <scope>SUBUNIT</scope>
    <scope>SUBCELLULAR LOCATION</scope>
    <scope>DOMAIN</scope>
</reference>
<reference evidence="20 21" key="9">
    <citation type="journal article" date="2009" name="J. Mol. Biol.">
        <title>Crystal structure of the GluR2 amino-terminal domain provides insights into the architecture and assembly of ionotropic glutamate receptors.</title>
        <authorList>
            <person name="Clayton A."/>
            <person name="Siebold C."/>
            <person name="Gilbert R.J."/>
            <person name="Sutton G.C."/>
            <person name="Harlos K."/>
            <person name="McIlhinney R.A."/>
            <person name="Jones E.Y."/>
            <person name="Aricescu A.R."/>
        </authorList>
    </citation>
    <scope>X-RAY CRYSTALLOGRAPHY (1.80 ANGSTROMS) OF 25-412</scope>
    <scope>SUBUNIT</scope>
    <scope>DISULFIDE BOND</scope>
    <scope>GLYCOSYLATION AT ASN-370</scope>
</reference>
<reference evidence="22" key="10">
    <citation type="journal article" date="2010" name="J. Med. Chem.">
        <title>Discovery of N-[(2S)-5-(6-fluoro-3-pyridinyl)-2,3-dihydro-1H-inden-2-yl]-2-propanesulfonamide, a novel clinical AMPA receptor positive modulator.</title>
        <authorList>
            <person name="Ward S.E."/>
            <person name="Harries M."/>
            <person name="Aldegheri L."/>
            <person name="Andreotti D."/>
            <person name="Ballantine S."/>
            <person name="Bax B.D."/>
            <person name="Harris A.J."/>
            <person name="Harker A.J."/>
            <person name="Lund J."/>
            <person name="Melarange R."/>
            <person name="Mingardi A."/>
            <person name="Mookherjee C."/>
            <person name="Mosley J."/>
            <person name="Neve M."/>
            <person name="Oliosi B."/>
            <person name="Profeta R."/>
            <person name="Smith K.J."/>
            <person name="Smith P.W."/>
            <person name="Spada S."/>
            <person name="Thewlis K.M."/>
            <person name="Yusaf S.P."/>
        </authorList>
    </citation>
    <scope>X-RAY CRYSTALLOGRAPHY (1.80 ANGSTROMS) OF 413-795 IN COMPLEX WITH L-GLUTAMATE AND SYNTHETIC INHIBITOR</scope>
    <scope>FUNCTION</scope>
    <scope>SUBUNIT</scope>
</reference>
<reference evidence="23" key="11">
    <citation type="journal article" date="2011" name="Bioorg. Med. Chem. Lett.">
        <title>Quinazolinedione sulfonamides: a novel class of competitive AMPA receptor antagonists with oral activity.</title>
        <authorList>
            <person name="Koller M."/>
            <person name="Lingenhoehl K."/>
            <person name="Schmutz M."/>
            <person name="Vranesic I.T."/>
            <person name="Kallen J."/>
            <person name="Auberson Y.P."/>
            <person name="Carcache D.A."/>
            <person name="Mattes H."/>
            <person name="Ofner S."/>
            <person name="Orain D."/>
            <person name="Urwyler S."/>
        </authorList>
    </citation>
    <scope>X-RAY CRYSTALLOGRAPHY (2.10 ANGSTROMS) OF 413-796 IN COMPLEX WITH L-GLUTAMATE AND SYNTHETIC INHIBITOR</scope>
    <scope>DISULFIDE BOND</scope>
    <scope>SUBUNIT</scope>
</reference>
<reference key="12">
    <citation type="journal article" date="2019" name="Nat. Commun.">
        <title>AMPA receptor GluA2 subunit defects are a cause of neurodevelopmental disorders.</title>
        <authorList>
            <consortium name="SYNAPS Study Group"/>
            <person name="Salpietro V."/>
            <person name="Dixon C.L."/>
            <person name="Guo H."/>
            <person name="Bello O.D."/>
            <person name="Vandrovcova J."/>
            <person name="Efthymiou S."/>
            <person name="Maroofian R."/>
            <person name="Heimer G."/>
            <person name="Burglen L."/>
            <person name="Valence S."/>
            <person name="Torti E."/>
            <person name="Hacke M."/>
            <person name="Rankin J."/>
            <person name="Tariq H."/>
            <person name="Colin E."/>
            <person name="Procaccio V."/>
            <person name="Striano P."/>
            <person name="Mankad K."/>
            <person name="Lieb A."/>
            <person name="Chen S."/>
            <person name="Pisani L."/>
            <person name="Bettencourt C."/>
            <person name="Maennikkoe R."/>
            <person name="Manole A."/>
            <person name="Brusco A."/>
            <person name="Grosso E."/>
            <person name="Ferrero G.B."/>
            <person name="Armstrong-Moron J."/>
            <person name="Gueden S."/>
            <person name="Bar-Yosef O."/>
            <person name="Tzadok M."/>
            <person name="Monaghan K.G."/>
            <person name="Santiago-Sim T."/>
            <person name="Person R.E."/>
            <person name="Cho M.T."/>
            <person name="Willaert R."/>
            <person name="Yoo Y."/>
            <person name="Chae J.H."/>
            <person name="Quan Y."/>
            <person name="Wu H."/>
            <person name="Wang T."/>
            <person name="Bernier R.A."/>
            <person name="Xia K."/>
            <person name="Blesson A."/>
            <person name="Jain M."/>
            <person name="Motazacker M.M."/>
            <person name="Jaeger B."/>
            <person name="Schneider A.L."/>
            <person name="Boysen K."/>
            <person name="Muir A.M."/>
            <person name="Myers C.T."/>
            <person name="Gavrilova R.H."/>
            <person name="Gunderson L."/>
            <person name="Schultz-Rogers L."/>
            <person name="Klee E.W."/>
            <person name="Dyment D."/>
            <person name="Osmond M."/>
            <person name="Parellada M."/>
            <person name="Llorente C."/>
            <person name="Gonzalez-Penas J."/>
            <person name="Carracedo A."/>
            <person name="Van Haeringen A."/>
            <person name="Ruivenkamp C."/>
            <person name="Nava C."/>
            <person name="Heron D."/>
            <person name="Nardello R."/>
            <person name="Iacomino M."/>
            <person name="Minetti C."/>
            <person name="Skabar A."/>
            <person name="Fabretto A."/>
            <person name="Raspall-Chaure M."/>
            <person name="Chez M."/>
            <person name="Tsai A."/>
            <person name="Fassi E."/>
            <person name="Shinawi M."/>
            <person name="Constantino J.N."/>
            <person name="De Zorzi R."/>
            <person name="Fortuna S."/>
            <person name="Kok F."/>
            <person name="Keren B."/>
            <person name="Bonneau D."/>
            <person name="Choi M."/>
            <person name="Benzeev B."/>
            <person name="Zara F."/>
            <person name="Mefford H.C."/>
            <person name="Scheffer I.E."/>
            <person name="Clayton-Smith J."/>
            <person name="Macaya A."/>
            <person name="Rothman J.E."/>
            <person name="Eichler E.E."/>
            <person name="Kullmann D.M."/>
            <person name="Houlden H."/>
        </authorList>
    </citation>
    <scope>VARIANTS NEDLIB GLU-47; GLY-302; 323-ARG--ILE-883 DEL; 528-PRO--LYS-530 DEL; THR-528; GLU-607; ARG-609; ASN-611; SER-639; LEU-644; ASN-646; LEU-647; ASP-776; LEU-788; VAL-792; VAL-807 AND SER-812</scope>
    <scope>INVOLVEMENT IN NEDLIB</scope>
    <scope>CHARACTERIZATION OF VARIANTS NEDLIB GLU-47; GLY-302; GLU-607; ARG-609; SER-639; LEU-644 AND ASN-646</scope>
    <scope>FUNCTION</scope>
    <scope>SUBCELLULAR LOCATION</scope>
</reference>
<comment type="function">
    <text evidence="2 5 8 12 14">Ionotropic glutamate receptor that functions as a ligand-gated cation channel, gated by L-glutamate and glutamatergic agonists such as alpha-amino-3-hydroxy-5-methyl-4-isoxazolepropionic acid (AMPA), quisqualic acid, and kainic acid (PubMed:20614889, PubMed:31300657, PubMed:8003671). L-glutamate acts as an excitatory neurotransmitter at many synapses in the central nervous system and plays an important role in fast excitatory synaptic transmission (PubMed:14687553). Binding of the excitatory neurotransmitter L-glutamate induces a conformation change, leading to the opening of the cation channel, and thereby converts the chemical signal to an electrical impulse upon entry of monovalent and divalent cations such as sodium and calcium (PubMed:20614889, PubMed:8003671). The receptor then desensitizes rapidly and enters in a transient inactive state, characterized by the presence of bound agonist (By similarity). In the presence of CACNG4 or CACNG7 or CACNG8, shows resensitization which is characterized by a delayed accumulation of current flux upon continued application of L-glutamate (By similarity). Through complex formation with NSG1, GRIP1 and STX12 controls the intracellular fate of AMPAR and the endosomal sorting of the GRIA2 subunit toward recycling and membrane targeting (By similarity).</text>
</comment>
<comment type="catalytic activity">
    <reaction evidence="2">
        <text>Ca(2+)(in) = Ca(2+)(out)</text>
        <dbReference type="Rhea" id="RHEA:29671"/>
        <dbReference type="ChEBI" id="CHEBI:29108"/>
    </reaction>
</comment>
<comment type="catalytic activity">
    <reaction evidence="2">
        <text>Na(+)(in) = Na(+)(out)</text>
        <dbReference type="Rhea" id="RHEA:34963"/>
        <dbReference type="ChEBI" id="CHEBI:29101"/>
    </reaction>
</comment>
<comment type="subunit">
    <text evidence="2 3 5 7 8 9 14">Homotetramer or heterotetramer of pore-forming glutamate receptor subunits (PubMed:14687553, PubMed:19651138, PubMed:20614889, PubMed:21531559, PubMed:8003671). Tetramers may be formed by the dimerization of dimers (PubMed:14687553, PubMed:19651138, PubMed:20614889, PubMed:21531559, PubMed:8003671). May interact with MPP4. Forms a ternary complex with GRIP1 and CSPG4. Interacts with ATAD1 in an ATP-dependent manner. ATAD1-catalyzed ATP hydrolysis disrupts binding to ATAD1 and to GRIP1 and leads to AMPAR complex disassembly. Interacts with GRIP1 and GRIP2 (By similarity). Interacts with NSF via its C-terminus (By similarity). Isoform 1, but not isoform 3, interacts with PICK1 (By similarity). Interacts with CACNG2 (By similarity). Interacts with GRIA1 and SYNDIG1 (By similarity). Part of a complex containing GRIA2, NSF and NAPA and/or NAPB (By similarity). Interacts with SNX27 (via PDZ domain); the interaction is required for recycling to the plasma membrane when endocytosed and prevent degradation in lysosomes (By similarity). Interacts with LRFN1. Found in a complex with GRIA1, GRIA3, GRIA4, CNIH2, CNIH3, CACNG2, CACNG3, CACNG4, CACNG5, CACNG7 and CACNG8. Interacts with CACNG5 (By similarity). Interacts with OLFM2. Interacts with AP4B1, AP4E1 and AP4M1; probably indirect it mediates the somatodendritic localization of GRIA2 in neurons (By similarity). Forms a complex with GRIP1, NSG1 and STX12; controls the intracellular fate of AMPAR and the endosomal sorting of the GRIA2 subunit toward recycling and membrane targeting. Interacts with IQSEC1; the interaction is required for ARF6 activation. Interacts (heterotetramer form) with CNIH2 and CNIH3; this interaction promotes expression at the plasma membrane and extensively modulates their gating properties by slowing deactivation and desensitization kinetics (By similarity).</text>
</comment>
<comment type="interaction">
    <interactant intactId="EBI-3909876">
        <id>P42262</id>
    </interactant>
    <interactant intactId="EBI-712251">
        <id>P46459</id>
        <label>NSF</label>
    </interactant>
    <organismsDiffer>false</organismsDiffer>
    <experiments>2</experiments>
</comment>
<comment type="interaction">
    <interactant intactId="EBI-3909876">
        <id>P42262</id>
    </interactant>
    <interactant intactId="EBI-77728">
        <id>Q9EP80</id>
        <label>Pick1</label>
    </interactant>
    <organismsDiffer>true</organismsDiffer>
    <experiments>2</experiments>
</comment>
<comment type="subcellular location">
    <subcellularLocation>
        <location evidence="11 12">Cell membrane</location>
        <topology evidence="11">Multi-pass membrane protein</topology>
    </subcellularLocation>
    <subcellularLocation>
        <location evidence="11">Postsynaptic cell membrane</location>
        <topology evidence="11">Multi-pass membrane protein</topology>
    </subcellularLocation>
    <subcellularLocation>
        <location evidence="3">Postsynaptic density membrane</location>
        <topology evidence="3">Multi-pass membrane protein</topology>
    </subcellularLocation>
    <text evidence="2 3">Interaction with CACNG2, CNIH2 and CNIH3 promotes cell surface expression (By similarity). Displays a somatodendritic localization and is excluded from axons in neurons (By similarity).</text>
</comment>
<comment type="alternative products">
    <event type="alternative splicing"/>
    <isoform>
        <id>P42262-1</id>
        <name>Flop</name>
        <sequence type="displayed"/>
    </isoform>
    <isoform>
        <id>P42262-2</id>
        <name>Flip</name>
        <sequence type="described" ref="VSP_053350"/>
    </isoform>
    <isoform>
        <id>P42262-3</id>
        <name>3</name>
        <name>Long</name>
        <sequence type="described" ref="VSP_029309"/>
    </isoform>
    <isoform>
        <id>P42262-4</id>
        <name>4</name>
        <sequence type="described" ref="VSP_055920 VSP_053350"/>
    </isoform>
</comment>
<comment type="domain">
    <text evidence="11">The M4 transmembrane segment mediates tetramerization and is required for cell surface expression.</text>
</comment>
<comment type="PTM">
    <text evidence="3">Palmitoylated. Depalmitoylated upon L-glutamate stimulation. Cys-610 palmitoylation leads to Golgi retention and decreased cell surface expression. In contrast, Cys-836 palmitoylation does not affect cell surface expression but regulates stimulation-dependent endocytosis.</text>
</comment>
<comment type="PTM">
    <text evidence="10">Ubiquitinated by RNF167, leading to its degradation.</text>
</comment>
<comment type="PTM">
    <text evidence="2">Phosphorylation at Tyr-876 is required for interaction with IQSEC1 and ARF6 activation, which in turn triggers AMPAR internalization for persistent synaptic depression.</text>
</comment>
<comment type="PTM">
    <text evidence="3">N-glycosylated.</text>
</comment>
<comment type="RNA editing">
    <location>
        <position position="607" evidence="13"/>
    </location>
    <text evidence="13">Partially edited (PubMed:7523595). Fully edited in the brain (PubMed:7523595). The presence of edited GRIA2 subunit in the heteromeric channel reduces the single channel conductance, confers Ca(2+)-impermeability, and results in a linear current-voltage relationship (PubMed:7523595). The unedited (Q) forms are highly permeable to divalent ions (PubMed:7523595).</text>
</comment>
<comment type="disease" evidence="12">
    <disease id="DI-05861">
        <name>Neurodevelopmental disorder with language impairment and behavioral abnormalities</name>
        <acronym>NEDLIB</acronym>
        <description>A neurodevelopmental disorder characterized by global developmental delay, impaired intellectual development, poor or absent speech, and behavioral abnormalities, such as autism spectrum disorder, repetitive behaviors, and hyperactivity. Some patients develop seizures and manifest developmental regression.</description>
        <dbReference type="MIM" id="618917"/>
    </disease>
    <text evidence="18">The disease is caused by variants affecting the gene represented in this entry. The genetic variation producing the missense variant p.Q607E, associated with NEDLIB, is predicted to deeply affect RNA editing. In a physiological context, the adenosine (A) residue of the original glutamine (Q) codon CAG is post-transcriptionaly edited to inosine (I) by ADAR2, leading to a codon recognized by the ribosome as arginine (R). The glutamate (E) codon GAG, resulting from the genetic variation, is predicted to be edited 90% less than the normal CAG codon. If edited, the codon GIG would be translated as p.Q607G.</text>
</comment>
<comment type="miscellaneous">
    <text evidence="2">The postsynaptic actions of L-glutamate are mediated by a variety of receptors that are named according to their selective agonists. This receptor binds AMPA (quisqualate) &gt; L-glutamate &gt; kainate.</text>
</comment>
<comment type="similarity">
    <text evidence="17">Belongs to the glutamate-gated ion channel (TC 1.A.10.1) family. GRIA2 subfamily.</text>
</comment>
<sequence length="883" mass="98821">MQKIMHISVLLSPVLWGLIFGVSSNSIQIGGLFPRGADQEYSAFRVGMVQFSTSEFRLTPHIDNLEVANSFAVTNAFCSQFSRGVYAIFGFYDKKSVNTITSFCGTLHVSFITPSFPTDGTHPFVIQMRPDLKGALLSLIEYYQWDKFAYLYDSDRGLSTLQAVLDSAAEKKWQVTAINVGNINNDKKDEMYRSLFQDLELKKERRVILDCERDKVNDIVDQVITIGKHVKGYHYIIANLGFTDGDLLKIQFGGANVSGFQIVDYDDSLVSKFIERWSTLEEKEYPGAHTTTIKYTSALTYDAVQVMTEAFRNLRKQRIEISRRGNAGDCLANPAVPWGQGVEIERALKQVQVEGLSGNIKFDQNGKRINYTINIMELKTNGPRKIGYWSEVDKMVVTLTELPSGNDTSGLENKTVVVTTILESPYVMMKKNHEMLEGNERYEGYCVDLAAEIAKHCGFKYKLTIVGDGKYGARDADTKIWNGMVGELVYGKADIAIAPLTITLVREEVIDFSKPFMSLGISIMIKKPQKSKPGVFSFLDPLAYEIWMCIVFAYIGVSVVLFLVSRFSPYEWHTEEFEDGRETQSSESTNEFGIFNSLWFSLGAFMQQGCDISPRSLSGRIVGGVWWFFTLIIISSYTANLAAFLTVERMVSPIESAEDLSKQTEIAYGTLDSGSTKEFFRRSKIAVFDKMWTYMRSAEPSVFVRTTAEGVARVRKSKGKYAYLLESTMNEYIEQRKPCDTMKVGGNLDSKGYGIATPKGSSLRNAVNLAVLKLNEQGLLDKLKNKWWYDKGECGSGGGDSKEKTSALSLSNVAGVFYILVGGLGLAMLVALIEFCYKSRAEAKRMKVAKNAQNINPSSSQNSQNFATYKEGYNVYGIESVKI</sequence>
<gene>
    <name evidence="19" type="primary">GRIA2</name>
    <name evidence="2" type="synonym">GluA2</name>
    <name type="synonym">GLUR2</name>
</gene>
<accession>P42262</accession>
<accession>A8MT92</accession>
<accession>I6L997</accession>
<accession>Q96FP6</accession>
<name>GRIA2_HUMAN</name>
<dbReference type="EMBL" id="L20814">
    <property type="protein sequence ID" value="AAA58631.1"/>
    <property type="molecule type" value="mRNA"/>
</dbReference>
<dbReference type="EMBL" id="AC079233">
    <property type="status" value="NOT_ANNOTATED_CDS"/>
    <property type="molecule type" value="Genomic_DNA"/>
</dbReference>
<dbReference type="EMBL" id="AC112240">
    <property type="status" value="NOT_ANNOTATED_CDS"/>
    <property type="molecule type" value="Genomic_DNA"/>
</dbReference>
<dbReference type="EMBL" id="BC010574">
    <property type="protein sequence ID" value="AAH10574.1"/>
    <property type="molecule type" value="mRNA"/>
</dbReference>
<dbReference type="EMBL" id="BC028736">
    <property type="protein sequence ID" value="AAH28736.2"/>
    <property type="molecule type" value="mRNA"/>
</dbReference>
<dbReference type="CCDS" id="CCDS3797.1">
    <molecule id="P42262-2"/>
</dbReference>
<dbReference type="CCDS" id="CCDS43274.1">
    <molecule id="P42262-1"/>
</dbReference>
<dbReference type="CCDS" id="CCDS43275.1">
    <molecule id="P42262-4"/>
</dbReference>
<dbReference type="PIR" id="I58181">
    <property type="entry name" value="I58181"/>
</dbReference>
<dbReference type="RefSeq" id="NP_000817.5">
    <molecule id="P42262-2"/>
    <property type="nucleotide sequence ID" value="NM_000826.6"/>
</dbReference>
<dbReference type="RefSeq" id="NP_001077088.2">
    <molecule id="P42262-1"/>
    <property type="nucleotide sequence ID" value="NM_001083619.3"/>
</dbReference>
<dbReference type="RefSeq" id="NP_001077089.2">
    <molecule id="P42262-4"/>
    <property type="nucleotide sequence ID" value="NM_001083620.3"/>
</dbReference>
<dbReference type="RefSeq" id="NP_001365930.3">
    <molecule id="P42262-4"/>
    <property type="nucleotide sequence ID" value="NM_001379001.3"/>
</dbReference>
<dbReference type="RefSeq" id="XP_016863605.1">
    <property type="nucleotide sequence ID" value="XM_017008116.1"/>
</dbReference>
<dbReference type="RefSeq" id="XP_016863606.1">
    <property type="nucleotide sequence ID" value="XM_017008117.1"/>
</dbReference>
<dbReference type="PDB" id="2WJW">
    <property type="method" value="X-ray"/>
    <property type="resolution" value="1.80 A"/>
    <property type="chains" value="A=25-412"/>
</dbReference>
<dbReference type="PDB" id="2WJX">
    <property type="method" value="X-ray"/>
    <property type="resolution" value="4.10 A"/>
    <property type="chains" value="A/B/C=25-412"/>
</dbReference>
<dbReference type="PDB" id="2XHD">
    <property type="method" value="X-ray"/>
    <property type="resolution" value="1.80 A"/>
    <property type="chains" value="A/B=413-527, A/B=653-796"/>
</dbReference>
<dbReference type="PDB" id="3R7X">
    <property type="method" value="X-ray"/>
    <property type="resolution" value="2.10 A"/>
    <property type="chains" value="A/B=413-527, A/B=653-796"/>
</dbReference>
<dbReference type="PDB" id="3RN8">
    <property type="method" value="X-ray"/>
    <property type="resolution" value="1.70 A"/>
    <property type="chains" value="A/B/C=413-527, A/B/C=653-812"/>
</dbReference>
<dbReference type="PDB" id="3RNN">
    <property type="method" value="X-ray"/>
    <property type="resolution" value="1.75 A"/>
    <property type="chains" value="A/B/C=413-527, A/B/C=653-812"/>
</dbReference>
<dbReference type="PDB" id="3UA8">
    <property type="method" value="X-ray"/>
    <property type="resolution" value="1.90 A"/>
    <property type="chains" value="A=413-527, A=653-796"/>
</dbReference>
<dbReference type="PDB" id="5H8S">
    <property type="method" value="X-ray"/>
    <property type="resolution" value="1.70 A"/>
    <property type="chains" value="A/B/C=413-527, A/B/C=653-796"/>
</dbReference>
<dbReference type="PDB" id="5YBF">
    <property type="method" value="X-ray"/>
    <property type="resolution" value="1.50 A"/>
    <property type="chains" value="A/B/C/D/E/F=413-527, A/B/C/D/E/F=653-796"/>
</dbReference>
<dbReference type="PDB" id="5YBG">
    <property type="method" value="X-ray"/>
    <property type="resolution" value="1.52 A"/>
    <property type="chains" value="A/B/C/D/E/F=413-527, A/B/C/D/E/F=653-796"/>
</dbReference>
<dbReference type="PDB" id="5ZG0">
    <property type="method" value="X-ray"/>
    <property type="resolution" value="1.58 A"/>
    <property type="chains" value="A/B/C/D/E/F=413-526, A/B/C/D/E/F=653-796"/>
</dbReference>
<dbReference type="PDB" id="5ZG1">
    <property type="method" value="X-ray"/>
    <property type="resolution" value="1.32 A"/>
    <property type="chains" value="A/B=413-526, A/B=653-796"/>
</dbReference>
<dbReference type="PDB" id="5ZG2">
    <property type="method" value="X-ray"/>
    <property type="resolution" value="1.25 A"/>
    <property type="chains" value="A/B=413-526, A/B=653-796"/>
</dbReference>
<dbReference type="PDB" id="5ZG3">
    <property type="method" value="X-ray"/>
    <property type="resolution" value="1.65 A"/>
    <property type="chains" value="A/B/C/D/E/F=413-527, A/B/C/D/E/F=653-796"/>
</dbReference>
<dbReference type="PDB" id="7F3O">
    <property type="method" value="X-ray"/>
    <property type="resolution" value="1.44 A"/>
    <property type="chains" value="A/B/C/D/E/F=413-527, A/B/C/D/E/F=653-796"/>
</dbReference>
<dbReference type="PDB" id="8I0B">
    <property type="method" value="X-ray"/>
    <property type="resolution" value="1.73 A"/>
    <property type="chains" value="A/B=413-527, A/B=653-834"/>
</dbReference>
<dbReference type="PDBsum" id="2WJW"/>
<dbReference type="PDBsum" id="2WJX"/>
<dbReference type="PDBsum" id="2XHD"/>
<dbReference type="PDBsum" id="3R7X"/>
<dbReference type="PDBsum" id="3RN8"/>
<dbReference type="PDBsum" id="3RNN"/>
<dbReference type="PDBsum" id="3UA8"/>
<dbReference type="PDBsum" id="5H8S"/>
<dbReference type="PDBsum" id="5YBF"/>
<dbReference type="PDBsum" id="5YBG"/>
<dbReference type="PDBsum" id="5ZG0"/>
<dbReference type="PDBsum" id="5ZG1"/>
<dbReference type="PDBsum" id="5ZG2"/>
<dbReference type="PDBsum" id="5ZG3"/>
<dbReference type="PDBsum" id="7F3O"/>
<dbReference type="PDBsum" id="8I0B"/>
<dbReference type="SMR" id="P42262"/>
<dbReference type="BioGRID" id="109148">
    <property type="interactions" value="55"/>
</dbReference>
<dbReference type="ComplexPortal" id="CPX-8767">
    <property type="entry name" value="GluA1-GluA2 AMPA receptor complex"/>
</dbReference>
<dbReference type="CORUM" id="P42262"/>
<dbReference type="DIP" id="DIP-42852N"/>
<dbReference type="FunCoup" id="P42262">
    <property type="interactions" value="938"/>
</dbReference>
<dbReference type="IntAct" id="P42262">
    <property type="interactions" value="20"/>
</dbReference>
<dbReference type="MINT" id="P42262"/>
<dbReference type="STRING" id="9606.ENSP00000296526"/>
<dbReference type="BindingDB" id="P42262"/>
<dbReference type="ChEMBL" id="CHEMBL4016"/>
<dbReference type="DrugBank" id="DB03319">
    <property type="generic name" value="(2S)-2-Ammonio-3-[5-(2-methyl-2-propanyl)-3-oxido-1,2-oxazol-4-yl]propanoate"/>
</dbReference>
<dbReference type="DrugBank" id="DB08305">
    <property type="generic name" value="(3R)-3-cyclopentyl-6-methyl-7-[(4-methylpiperazin-1-yl)sulfonyl]-3,4-dihydro-2H-1,2-benzothiazine 1,1-dioxide"/>
</dbReference>
<dbReference type="DrugBank" id="DB08304">
    <property type="generic name" value="(3R)-3-cyclopentyl-7-[(4-methylpiperazin-1-yl)sulfonyl]-3,4-dihydro-2H-1,2-benzothiazine 1,1-dioxide"/>
</dbReference>
<dbReference type="DrugBank" id="DB08303">
    <property type="generic name" value="(3S)-3-cyclopentyl-6-methyl-7-[(4-methylpiperazin-1-yl)sulfonyl]-3,4-dihydro-2H-1,2,4-benzothiadiazine 1,1-dioxide"/>
</dbReference>
<dbReference type="DrugBank" id="DB03240">
    <property type="generic name" value="(S)-2-Amino-3-(1,3,5,7-Pentahydro-2,4-Dioxo-Cyclopenta[E]Pyrimidin-1-Yl) Proionic Acid"/>
</dbReference>
<dbReference type="DrugBank" id="DB02057">
    <property type="generic name" value="(S)-AMPA"/>
</dbReference>
<dbReference type="DrugBank" id="DB01664">
    <property type="generic name" value="(S)-DES-ME-AMPA"/>
</dbReference>
<dbReference type="DrugBank" id="DB07598">
    <property type="generic name" value="2,3,6A,7,8,9-HEXAHYDRO-11H-[1,4]DIOXINO[2,3-G]PYRROLO[2,1-B][1,3]BENZOXAZIN-11-ONE"/>
</dbReference>
<dbReference type="DrugBank" id="DB04152">
    <property type="generic name" value="2-Amino-3-(3-Hydroxy-7,8-Dihydro-6h-Cyclohepta[D]-4-Isoxazolyl)Propionic Acid"/>
</dbReference>
<dbReference type="DrugBank" id="DB02347">
    <property type="generic name" value="2-Amino-3-(5-Tert-Butyl-3-(Phosphonomethoxy)-4-Isoxazolyl)Propionic Acid"/>
</dbReference>
<dbReference type="DrugBank" id="DB01351">
    <property type="generic name" value="Amobarbital"/>
</dbReference>
<dbReference type="DrugBank" id="DB04599">
    <property type="generic name" value="Aniracetam"/>
</dbReference>
<dbReference type="DrugBank" id="DB01352">
    <property type="generic name" value="Aprobarbital"/>
</dbReference>
<dbReference type="DrugBank" id="DB01483">
    <property type="generic name" value="Barbital"/>
</dbReference>
<dbReference type="DrugBank" id="DB04000">
    <property type="generic name" value="Bromo-Willardiine"/>
</dbReference>
<dbReference type="DrugBank" id="DB00237">
    <property type="generic name" value="Butabarbital"/>
</dbReference>
<dbReference type="DrugBank" id="DB00241">
    <property type="generic name" value="Butalbital"/>
</dbReference>
<dbReference type="DrugBank" id="DB01353">
    <property type="generic name" value="Butobarbital"/>
</dbReference>
<dbReference type="DrugBank" id="DB05047">
    <property type="generic name" value="CX-717"/>
</dbReference>
<dbReference type="DrugBank" id="DB01496">
    <property type="generic name" value="Dihydro-2-thioxo-5-((5-(2-(trifluoromethyl)phenyl)-2-furanyl)methyl)-4,6(1H,5H)-pyrimidinedione"/>
</dbReference>
<dbReference type="DrugBank" id="DB00898">
    <property type="generic name" value="Ethanol"/>
</dbReference>
<dbReference type="DrugBank" id="DB03759">
    <property type="generic name" value="FG-9041"/>
</dbReference>
<dbReference type="DrugBank" id="DB13146">
    <property type="generic name" value="Fluciclovine (18F)"/>
</dbReference>
<dbReference type="DrugBank" id="DB02966">
    <property type="generic name" value="Fluoro-Willardiine"/>
</dbReference>
<dbReference type="DrugBank" id="DB00142">
    <property type="generic name" value="Glutamic acid"/>
</dbReference>
<dbReference type="DrugBank" id="DB01354">
    <property type="generic name" value="Heptabarbital"/>
</dbReference>
<dbReference type="DrugBank" id="DB01355">
    <property type="generic name" value="Hexobarbital"/>
</dbReference>
<dbReference type="DrugBank" id="DB02818">
    <property type="generic name" value="Iodo-Willardiine"/>
</dbReference>
<dbReference type="DrugBank" id="DB00463">
    <property type="generic name" value="Metharbital"/>
</dbReference>
<dbReference type="DrugBank" id="DB00849">
    <property type="generic name" value="Methylphenobarbital"/>
</dbReference>
<dbReference type="DrugBank" id="DB07455">
    <property type="generic name" value="N,N'-[biphenyl-4,4'-diyldi(2R)propane-2,1-diyl]dimethanesulfonamide"/>
</dbReference>
<dbReference type="DrugBank" id="DB05454">
    <property type="generic name" value="Paliroden"/>
</dbReference>
<dbReference type="DrugBank" id="DB00312">
    <property type="generic name" value="Pentobarbital"/>
</dbReference>
<dbReference type="DrugBank" id="DB08883">
    <property type="generic name" value="Perampanel"/>
</dbReference>
<dbReference type="DrugBank" id="DB01174">
    <property type="generic name" value="Phenobarbital"/>
</dbReference>
<dbReference type="DrugBank" id="DB00794">
    <property type="generic name" value="Primidone"/>
</dbReference>
<dbReference type="DrugBank" id="DB01346">
    <property type="generic name" value="Quinidine barbiturate"/>
</dbReference>
<dbReference type="DrugBank" id="DB02999">
    <property type="generic name" value="Quisqualic acid"/>
</dbReference>
<dbReference type="DrugBank" id="DB00418">
    <property type="generic name" value="Secobarbital"/>
</dbReference>
<dbReference type="DrugBank" id="DB04982">
    <property type="generic name" value="Talampanel"/>
</dbReference>
<dbReference type="DrugBank" id="DB00306">
    <property type="generic name" value="Talbutal"/>
</dbReference>
<dbReference type="DrugBank" id="DB04798">
    <property type="generic name" value="THIO-ATPA"/>
</dbReference>
<dbReference type="DrugBank" id="DB00599">
    <property type="generic name" value="Thiopental"/>
</dbReference>
<dbReference type="DrugBank" id="DB04129">
    <property type="generic name" value="Willardiine"/>
</dbReference>
<dbReference type="DrugCentral" id="P42262"/>
<dbReference type="GuidetoPHARMACOLOGY" id="445"/>
<dbReference type="TCDB" id="1.A.10.1.13">
    <property type="family name" value="the glutamate-gated ion channel (gic) family of neurotransmitter receptors"/>
</dbReference>
<dbReference type="GlyCosmos" id="P42262">
    <property type="glycosylation" value="4 sites, No reported glycans"/>
</dbReference>
<dbReference type="GlyGen" id="P42262">
    <property type="glycosylation" value="4 sites"/>
</dbReference>
<dbReference type="iPTMnet" id="P42262"/>
<dbReference type="PhosphoSitePlus" id="P42262"/>
<dbReference type="SwissPalm" id="P42262"/>
<dbReference type="BioMuta" id="GRIA2"/>
<dbReference type="DMDM" id="23831146"/>
<dbReference type="jPOST" id="P42262"/>
<dbReference type="MassIVE" id="P42262"/>
<dbReference type="PaxDb" id="9606-ENSP00000296526"/>
<dbReference type="PeptideAtlas" id="P42262"/>
<dbReference type="ProteomicsDB" id="2007"/>
<dbReference type="ProteomicsDB" id="55498">
    <molecule id="P42262-1"/>
</dbReference>
<dbReference type="ProteomicsDB" id="55499">
    <molecule id="P42262-2"/>
</dbReference>
<dbReference type="ProteomicsDB" id="55500">
    <molecule id="P42262-3"/>
</dbReference>
<dbReference type="Pumba" id="P42262"/>
<dbReference type="ABCD" id="P42262">
    <property type="antibodies" value="1 sequenced antibody"/>
</dbReference>
<dbReference type="Antibodypedia" id="1529">
    <property type="antibodies" value="677 antibodies from 47 providers"/>
</dbReference>
<dbReference type="DNASU" id="2891"/>
<dbReference type="Ensembl" id="ENST00000264426.14">
    <molecule id="P42262-1"/>
    <property type="protein sequence ID" value="ENSP00000264426.9"/>
    <property type="gene ID" value="ENSG00000120251.22"/>
</dbReference>
<dbReference type="Ensembl" id="ENST00000296526.12">
    <molecule id="P42262-2"/>
    <property type="protein sequence ID" value="ENSP00000296526.7"/>
    <property type="gene ID" value="ENSG00000120251.22"/>
</dbReference>
<dbReference type="Ensembl" id="ENST00000393815.6">
    <molecule id="P42262-4"/>
    <property type="protein sequence ID" value="ENSP00000377403.2"/>
    <property type="gene ID" value="ENSG00000120251.22"/>
</dbReference>
<dbReference type="Ensembl" id="ENST00000507898.5">
    <molecule id="P42262-4"/>
    <property type="protein sequence ID" value="ENSP00000426845.1"/>
    <property type="gene ID" value="ENSG00000120251.22"/>
</dbReference>
<dbReference type="Ensembl" id="ENST00000645636.1">
    <molecule id="P42262-3"/>
    <property type="protein sequence ID" value="ENSP00000495569.1"/>
    <property type="gene ID" value="ENSG00000120251.22"/>
</dbReference>
<dbReference type="Ensembl" id="ENST00000703765.1">
    <molecule id="P42262-4"/>
    <property type="protein sequence ID" value="ENSP00000515472.1"/>
    <property type="gene ID" value="ENSG00000120251.22"/>
</dbReference>
<dbReference type="GeneID" id="2891"/>
<dbReference type="KEGG" id="hsa:2891"/>
<dbReference type="MANE-Select" id="ENST00000264426.14">
    <property type="protein sequence ID" value="ENSP00000264426.9"/>
    <property type="RefSeq nucleotide sequence ID" value="NM_001083619.3"/>
    <property type="RefSeq protein sequence ID" value="NP_001077088.2"/>
</dbReference>
<dbReference type="UCSC" id="uc003ipk.5">
    <molecule id="P42262-1"/>
    <property type="organism name" value="human"/>
</dbReference>
<dbReference type="AGR" id="HGNC:4572"/>
<dbReference type="CTD" id="2891"/>
<dbReference type="DisGeNET" id="2891"/>
<dbReference type="GeneCards" id="GRIA2"/>
<dbReference type="GeneReviews" id="GRIA2"/>
<dbReference type="HGNC" id="HGNC:4572">
    <property type="gene designation" value="GRIA2"/>
</dbReference>
<dbReference type="HPA" id="ENSG00000120251">
    <property type="expression patterns" value="Group enriched (brain, pituitary gland)"/>
</dbReference>
<dbReference type="MalaCards" id="GRIA2"/>
<dbReference type="MIM" id="138247">
    <property type="type" value="gene"/>
</dbReference>
<dbReference type="MIM" id="618917">
    <property type="type" value="phenotype"/>
</dbReference>
<dbReference type="neXtProt" id="NX_P42262"/>
<dbReference type="OpenTargets" id="ENSG00000120251"/>
<dbReference type="PharmGKB" id="PA28967"/>
<dbReference type="VEuPathDB" id="HostDB:ENSG00000120251"/>
<dbReference type="eggNOG" id="KOG1054">
    <property type="taxonomic scope" value="Eukaryota"/>
</dbReference>
<dbReference type="GeneTree" id="ENSGT00940000156950"/>
<dbReference type="HOGENOM" id="CLU_007257_1_2_1"/>
<dbReference type="InParanoid" id="P42262"/>
<dbReference type="OMA" id="VMPPSTH"/>
<dbReference type="OrthoDB" id="5984008at2759"/>
<dbReference type="PAN-GO" id="P42262">
    <property type="GO annotations" value="4 GO annotations based on evolutionary models"/>
</dbReference>
<dbReference type="PhylomeDB" id="P42262"/>
<dbReference type="TreeFam" id="TF315232"/>
<dbReference type="PathwayCommons" id="P42262"/>
<dbReference type="Reactome" id="R-HSA-399710">
    <property type="pathway name" value="Activation of AMPA receptors"/>
</dbReference>
<dbReference type="Reactome" id="R-HSA-416993">
    <property type="pathway name" value="Trafficking of GluR2-containing AMPA receptors"/>
</dbReference>
<dbReference type="Reactome" id="R-HSA-438066">
    <property type="pathway name" value="Unblocking of NMDA receptors, glutamate binding and activation"/>
</dbReference>
<dbReference type="Reactome" id="R-HSA-9022699">
    <property type="pathway name" value="MECP2 regulates neuronal receptors and channels"/>
</dbReference>
<dbReference type="Reactome" id="R-HSA-9620244">
    <property type="pathway name" value="Long-term potentiation"/>
</dbReference>
<dbReference type="SignaLink" id="P42262"/>
<dbReference type="SIGNOR" id="P42262"/>
<dbReference type="BioGRID-ORCS" id="2891">
    <property type="hits" value="10 hits in 1151 CRISPR screens"/>
</dbReference>
<dbReference type="CD-CODE" id="FB4E32DD">
    <property type="entry name" value="Presynaptic clusters and postsynaptic densities"/>
</dbReference>
<dbReference type="ChiTaRS" id="GRIA2">
    <property type="organism name" value="human"/>
</dbReference>
<dbReference type="EvolutionaryTrace" id="P42262"/>
<dbReference type="GeneWiki" id="GRIA2"/>
<dbReference type="GenomeRNAi" id="2891"/>
<dbReference type="Pharos" id="P42262">
    <property type="development level" value="Tclin"/>
</dbReference>
<dbReference type="PRO" id="PR:P42262"/>
<dbReference type="Proteomes" id="UP000005640">
    <property type="component" value="Chromosome 4"/>
</dbReference>
<dbReference type="RNAct" id="P42262">
    <property type="molecule type" value="protein"/>
</dbReference>
<dbReference type="Bgee" id="ENSG00000120251">
    <property type="expression patterns" value="Expressed in frontal pole and 154 other cell types or tissues"/>
</dbReference>
<dbReference type="ExpressionAtlas" id="P42262">
    <property type="expression patterns" value="baseline and differential"/>
</dbReference>
<dbReference type="GO" id="GO:0032281">
    <property type="term" value="C:AMPA glutamate receptor complex"/>
    <property type="evidence" value="ECO:0000250"/>
    <property type="project" value="UniProtKB"/>
</dbReference>
<dbReference type="GO" id="GO:0032279">
    <property type="term" value="C:asymmetric synapse"/>
    <property type="evidence" value="ECO:0000250"/>
    <property type="project" value="ARUK-UCL"/>
</dbReference>
<dbReference type="GO" id="GO:0030425">
    <property type="term" value="C:dendrite"/>
    <property type="evidence" value="ECO:0000250"/>
    <property type="project" value="ARUK-UCL"/>
</dbReference>
<dbReference type="GO" id="GO:0043197">
    <property type="term" value="C:dendritic spine"/>
    <property type="evidence" value="ECO:0000318"/>
    <property type="project" value="GO_Central"/>
</dbReference>
<dbReference type="GO" id="GO:0030666">
    <property type="term" value="C:endocytic vesicle membrane"/>
    <property type="evidence" value="ECO:0000304"/>
    <property type="project" value="Reactome"/>
</dbReference>
<dbReference type="GO" id="GO:0060076">
    <property type="term" value="C:excitatory synapse"/>
    <property type="evidence" value="ECO:0000303"/>
    <property type="project" value="ARUK-UCL"/>
</dbReference>
<dbReference type="GO" id="GO:0009897">
    <property type="term" value="C:external side of plasma membrane"/>
    <property type="evidence" value="ECO:0000304"/>
    <property type="project" value="ARUK-UCL"/>
</dbReference>
<dbReference type="GO" id="GO:0043025">
    <property type="term" value="C:neuronal cell body"/>
    <property type="evidence" value="ECO:0000250"/>
    <property type="project" value="ARUK-UCL"/>
</dbReference>
<dbReference type="GO" id="GO:0005886">
    <property type="term" value="C:plasma membrane"/>
    <property type="evidence" value="ECO:0000250"/>
    <property type="project" value="UniProtKB"/>
</dbReference>
<dbReference type="GO" id="GO:0098794">
    <property type="term" value="C:postsynapse"/>
    <property type="evidence" value="ECO:0000304"/>
    <property type="project" value="ARUK-UCL"/>
</dbReference>
<dbReference type="GO" id="GO:0014069">
    <property type="term" value="C:postsynaptic density"/>
    <property type="evidence" value="ECO:0000250"/>
    <property type="project" value="ARUK-UCL"/>
</dbReference>
<dbReference type="GO" id="GO:0098839">
    <property type="term" value="C:postsynaptic density membrane"/>
    <property type="evidence" value="ECO:0000318"/>
    <property type="project" value="GO_Central"/>
</dbReference>
<dbReference type="GO" id="GO:0098843">
    <property type="term" value="C:postsynaptic endocytic zone"/>
    <property type="evidence" value="ECO:0000303"/>
    <property type="project" value="ARUK-UCL"/>
</dbReference>
<dbReference type="GO" id="GO:0004971">
    <property type="term" value="F:AMPA glutamate receptor activity"/>
    <property type="evidence" value="ECO:0000250"/>
    <property type="project" value="UniProtKB"/>
</dbReference>
<dbReference type="GO" id="GO:0001540">
    <property type="term" value="F:amyloid-beta binding"/>
    <property type="evidence" value="ECO:0000250"/>
    <property type="project" value="ARUK-UCL"/>
</dbReference>
<dbReference type="GO" id="GO:0004970">
    <property type="term" value="F:glutamate-gated receptor activity"/>
    <property type="evidence" value="ECO:0000314"/>
    <property type="project" value="UniProtKB"/>
</dbReference>
<dbReference type="GO" id="GO:0099094">
    <property type="term" value="F:ligand-gated monoatomic cation channel activity"/>
    <property type="evidence" value="ECO:0000250"/>
    <property type="project" value="UniProtKB"/>
</dbReference>
<dbReference type="GO" id="GO:1904315">
    <property type="term" value="F:transmitter-gated monoatomic ion channel activity involved in regulation of postsynaptic membrane potential"/>
    <property type="evidence" value="ECO:0000318"/>
    <property type="project" value="GO_Central"/>
</dbReference>
<dbReference type="GO" id="GO:0007268">
    <property type="term" value="P:chemical synaptic transmission"/>
    <property type="evidence" value="ECO:0000304"/>
    <property type="project" value="ProtInc"/>
</dbReference>
<dbReference type="GO" id="GO:0035235">
    <property type="term" value="P:ionotropic glutamate receptor signaling pathway"/>
    <property type="evidence" value="ECO:0000314"/>
    <property type="project" value="UniProtKB"/>
</dbReference>
<dbReference type="GO" id="GO:0050804">
    <property type="term" value="P:modulation of chemical synaptic transmission"/>
    <property type="evidence" value="ECO:0000318"/>
    <property type="project" value="GO_Central"/>
</dbReference>
<dbReference type="GO" id="GO:0007165">
    <property type="term" value="P:signal transduction"/>
    <property type="evidence" value="ECO:0000304"/>
    <property type="project" value="ProtInc"/>
</dbReference>
<dbReference type="GO" id="GO:0035249">
    <property type="term" value="P:synaptic transmission, glutamatergic"/>
    <property type="evidence" value="ECO:0000318"/>
    <property type="project" value="GO_Central"/>
</dbReference>
<dbReference type="CDD" id="cd06389">
    <property type="entry name" value="PBP1_iGluR_AMPA_GluR2"/>
    <property type="match status" value="1"/>
</dbReference>
<dbReference type="CDD" id="cd13715">
    <property type="entry name" value="PBP2_iGluR_AMPA"/>
    <property type="match status" value="1"/>
</dbReference>
<dbReference type="FunFam" id="1.10.287.70:FF:000067">
    <property type="entry name" value="glutamate receptor 2 isoform X1"/>
    <property type="match status" value="1"/>
</dbReference>
<dbReference type="FunFam" id="1.10.287.70:FF:000099">
    <property type="entry name" value="glutamate receptor 2 isoform X1"/>
    <property type="match status" value="1"/>
</dbReference>
<dbReference type="FunFam" id="3.40.190.10:FF:000001">
    <property type="entry name" value="Glutamate receptor ionotropic, kainate 2"/>
    <property type="match status" value="1"/>
</dbReference>
<dbReference type="FunFam" id="3.40.50.2300:FF:000004">
    <property type="entry name" value="Glutamate receptor, ionotropic, AMPA 2"/>
    <property type="match status" value="1"/>
</dbReference>
<dbReference type="FunFam" id="3.40.190.10:FF:000666">
    <property type="entry name" value="Glutamate receptor, ionotropic, AMPA 2a"/>
    <property type="match status" value="1"/>
</dbReference>
<dbReference type="Gene3D" id="1.10.287.70">
    <property type="match status" value="2"/>
</dbReference>
<dbReference type="Gene3D" id="3.40.50.2300">
    <property type="match status" value="2"/>
</dbReference>
<dbReference type="Gene3D" id="3.40.190.10">
    <property type="entry name" value="Periplasmic binding protein-like II"/>
    <property type="match status" value="2"/>
</dbReference>
<dbReference type="InterPro" id="IPR001828">
    <property type="entry name" value="ANF_lig-bd_rcpt"/>
</dbReference>
<dbReference type="InterPro" id="IPR019594">
    <property type="entry name" value="Glu/Gly-bd"/>
</dbReference>
<dbReference type="InterPro" id="IPR001508">
    <property type="entry name" value="Iono_Glu_rcpt_met"/>
</dbReference>
<dbReference type="InterPro" id="IPR015683">
    <property type="entry name" value="Ionotropic_Glu_rcpt"/>
</dbReference>
<dbReference type="InterPro" id="IPR001320">
    <property type="entry name" value="Iontro_rcpt_C"/>
</dbReference>
<dbReference type="InterPro" id="IPR028082">
    <property type="entry name" value="Peripla_BP_I"/>
</dbReference>
<dbReference type="PANTHER" id="PTHR18966">
    <property type="entry name" value="IONOTROPIC GLUTAMATE RECEPTOR"/>
    <property type="match status" value="1"/>
</dbReference>
<dbReference type="Pfam" id="PF01094">
    <property type="entry name" value="ANF_receptor"/>
    <property type="match status" value="1"/>
</dbReference>
<dbReference type="Pfam" id="PF00060">
    <property type="entry name" value="Lig_chan"/>
    <property type="match status" value="1"/>
</dbReference>
<dbReference type="Pfam" id="PF10613">
    <property type="entry name" value="Lig_chan-Glu_bd"/>
    <property type="match status" value="1"/>
</dbReference>
<dbReference type="PRINTS" id="PR00177">
    <property type="entry name" value="NMDARECEPTOR"/>
</dbReference>
<dbReference type="SMART" id="SM00918">
    <property type="entry name" value="Lig_chan-Glu_bd"/>
    <property type="match status" value="1"/>
</dbReference>
<dbReference type="SMART" id="SM00079">
    <property type="entry name" value="PBPe"/>
    <property type="match status" value="1"/>
</dbReference>
<dbReference type="SUPFAM" id="SSF53822">
    <property type="entry name" value="Periplasmic binding protein-like I"/>
    <property type="match status" value="1"/>
</dbReference>
<dbReference type="SUPFAM" id="SSF53850">
    <property type="entry name" value="Periplasmic binding protein-like II"/>
    <property type="match status" value="1"/>
</dbReference>
<dbReference type="SUPFAM" id="SSF81324">
    <property type="entry name" value="Voltage-gated potassium channels"/>
    <property type="match status" value="1"/>
</dbReference>
<proteinExistence type="evidence at protein level"/>
<protein>
    <recommendedName>
        <fullName evidence="17">Glutamate receptor 2</fullName>
        <shortName>GluR-2</shortName>
    </recommendedName>
    <alternativeName>
        <fullName>AMPA-selective glutamate receptor 2</fullName>
    </alternativeName>
    <alternativeName>
        <fullName>GluR-B</fullName>
    </alternativeName>
    <alternativeName>
        <fullName>GluR-K2</fullName>
    </alternativeName>
    <alternativeName>
        <fullName>Glutamate receptor ionotropic, AMPA 2</fullName>
    </alternativeName>
</protein>
<evidence type="ECO:0000250" key="1"/>
<evidence type="ECO:0000250" key="2">
    <source>
        <dbReference type="UniProtKB" id="P19491"/>
    </source>
</evidence>
<evidence type="ECO:0000250" key="3">
    <source>
        <dbReference type="UniProtKB" id="P23819"/>
    </source>
</evidence>
<evidence type="ECO:0000255" key="4"/>
<evidence type="ECO:0000269" key="5">
    <source>
    </source>
</evidence>
<evidence type="ECO:0000269" key="6">
    <source>
    </source>
</evidence>
<evidence type="ECO:0000269" key="7">
    <source>
    </source>
</evidence>
<evidence type="ECO:0000269" key="8">
    <source>
    </source>
</evidence>
<evidence type="ECO:0000269" key="9">
    <source>
    </source>
</evidence>
<evidence type="ECO:0000269" key="10">
    <source>
    </source>
</evidence>
<evidence type="ECO:0000269" key="11">
    <source>
    </source>
</evidence>
<evidence type="ECO:0000269" key="12">
    <source>
    </source>
</evidence>
<evidence type="ECO:0000269" key="13">
    <source>
    </source>
</evidence>
<evidence type="ECO:0000269" key="14">
    <source>
    </source>
</evidence>
<evidence type="ECO:0000303" key="15">
    <source>
    </source>
</evidence>
<evidence type="ECO:0000303" key="16">
    <source>
    </source>
</evidence>
<evidence type="ECO:0000305" key="17"/>
<evidence type="ECO:0000305" key="18">
    <source>
    </source>
</evidence>
<evidence type="ECO:0000312" key="19">
    <source>
        <dbReference type="HGNC" id="HGNC:4572"/>
    </source>
</evidence>
<evidence type="ECO:0007744" key="20">
    <source>
        <dbReference type="PDB" id="2WJW"/>
    </source>
</evidence>
<evidence type="ECO:0007744" key="21">
    <source>
        <dbReference type="PDB" id="2WJX"/>
    </source>
</evidence>
<evidence type="ECO:0007744" key="22">
    <source>
        <dbReference type="PDB" id="2XHD"/>
    </source>
</evidence>
<evidence type="ECO:0007744" key="23">
    <source>
        <dbReference type="PDB" id="3R7X"/>
    </source>
</evidence>
<evidence type="ECO:0007829" key="24">
    <source>
        <dbReference type="PDB" id="2WJW"/>
    </source>
</evidence>
<evidence type="ECO:0007829" key="25">
    <source>
        <dbReference type="PDB" id="5ZG2"/>
    </source>
</evidence>
<feature type="signal peptide" evidence="4">
    <location>
        <begin position="1"/>
        <end position="24"/>
    </location>
</feature>
<feature type="chain" id="PRO_0000011532" description="Glutamate receptor 2">
    <location>
        <begin position="25"/>
        <end position="883"/>
    </location>
</feature>
<feature type="topological domain" description="Extracellular" evidence="1">
    <location>
        <begin position="25"/>
        <end position="543"/>
    </location>
</feature>
<feature type="transmembrane region" description="Helical" evidence="1">
    <location>
        <begin position="544"/>
        <end position="564"/>
    </location>
</feature>
<feature type="topological domain" description="Cytoplasmic" evidence="1">
    <location>
        <begin position="565"/>
        <end position="591"/>
    </location>
</feature>
<feature type="intramembrane region" description="Helical; Pore-forming" evidence="1">
    <location>
        <begin position="592"/>
        <end position="607"/>
    </location>
</feature>
<feature type="intramembrane region" evidence="1">
    <location>
        <begin position="608"/>
        <end position="610"/>
    </location>
</feature>
<feature type="topological domain" description="Cytoplasmic" evidence="1">
    <location>
        <begin position="611"/>
        <end position="616"/>
    </location>
</feature>
<feature type="transmembrane region" description="Helical" evidence="1">
    <location>
        <begin position="617"/>
        <end position="637"/>
    </location>
</feature>
<feature type="topological domain" description="Extracellular" evidence="1">
    <location>
        <begin position="638"/>
        <end position="812"/>
    </location>
</feature>
<feature type="transmembrane region" description="Helical; Name=M4">
    <location>
        <begin position="813"/>
        <end position="833"/>
    </location>
</feature>
<feature type="topological domain" description="Cytoplasmic" evidence="1">
    <location>
        <begin position="834"/>
        <end position="883"/>
    </location>
</feature>
<feature type="region of interest" description="Required for interaction with IQSEC1" evidence="2">
    <location>
        <begin position="867"/>
        <end position="877"/>
    </location>
</feature>
<feature type="binding site" evidence="8 22">
    <location>
        <position position="499"/>
    </location>
    <ligand>
        <name>L-glutamate</name>
        <dbReference type="ChEBI" id="CHEBI:29985"/>
    </ligand>
</feature>
<feature type="binding site" evidence="8 22">
    <location>
        <position position="501"/>
    </location>
    <ligand>
        <name>L-glutamate</name>
        <dbReference type="ChEBI" id="CHEBI:29985"/>
    </ligand>
</feature>
<feature type="binding site" evidence="8 9 22 23">
    <location>
        <position position="506"/>
    </location>
    <ligand>
        <name>L-glutamate</name>
        <dbReference type="ChEBI" id="CHEBI:29985"/>
    </ligand>
</feature>
<feature type="binding site" evidence="8 22">
    <location>
        <position position="675"/>
    </location>
    <ligand>
        <name>L-glutamate</name>
        <dbReference type="ChEBI" id="CHEBI:29985"/>
    </ligand>
</feature>
<feature type="binding site" evidence="8 22">
    <location>
        <position position="676"/>
    </location>
    <ligand>
        <name>L-glutamate</name>
        <dbReference type="ChEBI" id="CHEBI:29985"/>
    </ligand>
</feature>
<feature type="binding site" evidence="8 9 22">
    <location>
        <position position="726"/>
    </location>
    <ligand>
        <name>L-glutamate</name>
        <dbReference type="ChEBI" id="CHEBI:29985"/>
    </ligand>
</feature>
<feature type="modified residue" description="Phosphoserine; by PKC" evidence="2">
    <location>
        <position position="683"/>
    </location>
</feature>
<feature type="modified residue" description="Phosphoserine; by PKG" evidence="2">
    <location>
        <position position="717"/>
    </location>
</feature>
<feature type="modified residue" description="Phosphoserine" evidence="3">
    <location>
        <position position="860"/>
    </location>
</feature>
<feature type="modified residue" description="Phosphoserine" evidence="3">
    <location>
        <position position="863"/>
    </location>
</feature>
<feature type="modified residue" description="Phosphotyrosine" evidence="3">
    <location>
        <position position="876"/>
    </location>
</feature>
<feature type="modified residue" description="Phosphoserine" evidence="3">
    <location>
        <position position="880"/>
    </location>
</feature>
<feature type="lipid moiety-binding region" description="S-palmitoyl cysteine" evidence="1">
    <location>
        <position position="610"/>
    </location>
</feature>
<feature type="lipid moiety-binding region" description="S-palmitoyl cysteine" evidence="1">
    <location>
        <position position="836"/>
    </location>
</feature>
<feature type="glycosylation site" description="N-linked (GlcNAc...) asparagine" evidence="4">
    <location>
        <position position="256"/>
    </location>
</feature>
<feature type="glycosylation site" description="N-linked (GlcNAc...) asparagine" evidence="7 20">
    <location>
        <position position="370"/>
    </location>
</feature>
<feature type="glycosylation site" description="N-linked (GlcNAc...) asparagine" evidence="4">
    <location>
        <position position="406"/>
    </location>
</feature>
<feature type="glycosylation site" description="N-linked (GlcNAc...) asparagine" evidence="4">
    <location>
        <position position="413"/>
    </location>
</feature>
<feature type="disulfide bond" evidence="7 20 21">
    <location>
        <begin position="78"/>
        <end position="330"/>
    </location>
</feature>
<feature type="disulfide bond" evidence="2">
    <location>
        <begin position="739"/>
        <end position="794"/>
    </location>
</feature>
<feature type="splice variant" id="VSP_055920" description="In isoform 4." evidence="15">
    <location>
        <begin position="1"/>
        <end position="47"/>
    </location>
</feature>
<feature type="splice variant" id="VSP_053350" description="In isoform Flip and isoform 4." evidence="15 16">
    <original>NAVNLAVLKLNEQGLLDKLKNKWWYDKGECGSGGGD</original>
    <variation>TPVNLAVLKLSEQGVLDKLKNKWWYDKGECGAKDSG</variation>
    <location>
        <begin position="765"/>
        <end position="800"/>
    </location>
</feature>
<feature type="splice variant" id="VSP_029309" description="In isoform 3." evidence="17">
    <original>VAKNAQNINPSSSQNSQNFATYKEGYNVYGIESVKI</original>
    <variation>MTLNDAMRNKARLSITGSTGENGRVMTPEFPKAVHAVPYVSPGMGMNVSVTDLS</variation>
    <location>
        <begin position="848"/>
        <end position="883"/>
    </location>
</feature>
<feature type="sequence variant" id="VAR_084679" description="In NEDLIB; uncertain significance; decreased localization to cell membrane; dbSNP:rs2126669313." evidence="12">
    <original>G</original>
    <variation>E</variation>
    <location>
        <position position="47"/>
    </location>
</feature>
<feature type="sequence variant" id="VAR_084680" description="In NEDLIB; severe decrease of ionotropic glutamate receptor activity; dbSNP:rs1735116193." evidence="12">
    <original>D</original>
    <variation>G</variation>
    <location>
        <position position="302"/>
    </location>
</feature>
<feature type="sequence variant" id="VAR_084681" description="In NEDLIB." evidence="12">
    <location>
        <begin position="323"/>
        <end position="883"/>
    </location>
</feature>
<feature type="sequence variant" id="VAR_084682" description="In NEDLIB; uncertain significance." evidence="12">
    <location>
        <begin position="528"/>
        <end position="530"/>
    </location>
</feature>
<feature type="sequence variant" id="VAR_084683" description="In NEDLIB; dbSNP:rs1735294501." evidence="12">
    <original>P</original>
    <variation>T</variation>
    <location>
        <position position="528"/>
    </location>
</feature>
<feature type="sequence variant" id="VAR_084684" description="In NEDLIB; homomeric channels show increased ionotropic glutamate receptor activity; decreased localization to cell membrane; dbSNP:rs2126940512." evidence="12">
    <original>Q</original>
    <variation>E</variation>
    <location>
        <position position="607"/>
    </location>
</feature>
<feature type="sequence variant" id="VAR_000303" description="In RNA edited version; dbSNP:rs17850674." evidence="6 14">
    <original>Q</original>
    <variation>R</variation>
    <location>
        <position position="607"/>
    </location>
</feature>
<feature type="sequence variant" id="VAR_037055" description="In dbSNP:rs17850675." evidence="6">
    <original>Q</original>
    <variation>R</variation>
    <location>
        <position position="608"/>
    </location>
</feature>
<feature type="sequence variant" id="VAR_084685" description="In NEDLIB; loss of ionotropic glutamate receptor activity; no effect on localization to cell membrane; dbSNP:rs1735303754." evidence="12">
    <original>G</original>
    <variation>R</variation>
    <location>
        <position position="609"/>
    </location>
</feature>
<feature type="sequence variant" id="VAR_084686" description="In NEDLIB; dbSNP:rs1553956958." evidence="12">
    <original>D</original>
    <variation>N</variation>
    <location>
        <position position="611"/>
    </location>
</feature>
<feature type="sequence variant" id="VAR_084687" description="In NEDLIB; reduced ionotropic glutamate receptor activity; decreased localization to cell membrane; dbSNP:rs1579377564." evidence="12">
    <original>A</original>
    <variation>S</variation>
    <location>
        <position position="639"/>
    </location>
</feature>
<feature type="sequence variant" id="VAR_084688" description="In NEDLIB; reduced ionotropic glutamate receptor activity; dbSNP:rs1735539015 and dbSNP:rs761753966." evidence="12">
    <original>F</original>
    <variation>L</variation>
    <location>
        <position position="644"/>
    </location>
</feature>
<feature type="sequence variant" id="VAR_084689" description="In NEDLIB; reduced ionotropic glutamate receptor activity; dbSNP:rs2126951773 and dbSNP:rs761753966." evidence="12">
    <original>T</original>
    <variation>N</variation>
    <location>
        <position position="646"/>
    </location>
</feature>
<feature type="sequence variant" id="VAR_084690" description="In NEDLIB; dbSNP:rs765072736." evidence="12">
    <original>V</original>
    <variation>L</variation>
    <location>
        <position position="647"/>
    </location>
</feature>
<feature type="sequence variant" id="VAR_084691" description="In NEDLIB." evidence="12">
    <original>E</original>
    <variation>D</variation>
    <location>
        <position position="776"/>
    </location>
</feature>
<feature type="sequence variant" id="VAR_084692" description="In NEDLIB; dbSNP:rs2127000861." evidence="12">
    <original>W</original>
    <variation>L</variation>
    <location>
        <position position="788"/>
    </location>
</feature>
<feature type="sequence variant" id="VAR_084693" description="In NEDLIB; dbSNP:rs2127000875." evidence="12">
    <original>G</original>
    <variation>V</variation>
    <location>
        <position position="792"/>
    </location>
</feature>
<feature type="sequence variant" id="VAR_084694" description="In NEDLIB; dbSNP:rs2127004544." evidence="12">
    <original>A</original>
    <variation>V</variation>
    <location>
        <position position="807"/>
    </location>
</feature>
<feature type="sequence variant" id="VAR_084695" description="In NEDLIB; dbSNP:rs2127004559." evidence="12">
    <original>N</original>
    <variation>S</variation>
    <location>
        <position position="812"/>
    </location>
</feature>
<feature type="sequence conflict" description="In Ref. 3; AAH10574." evidence="17" ref="3">
    <original>I</original>
    <variation>V</variation>
    <location>
        <position position="140"/>
    </location>
</feature>
<feature type="sequence conflict" description="In Ref. 1; AAA58631." evidence="17" ref="1">
    <original>G</original>
    <variation>E</variation>
    <location>
        <position position="241"/>
    </location>
</feature>
<feature type="sequence conflict" description="In Ref. 3; AAH28736." evidence="17" ref="3">
    <original>T</original>
    <variation>I</variation>
    <location>
        <position position="415"/>
    </location>
</feature>
<feature type="sequence conflict" description="In Ref. 1; AAA58631." evidence="17" ref="1">
    <original>R</original>
    <variation>G</variation>
    <location>
        <position position="764"/>
    </location>
</feature>
<feature type="strand" evidence="24">
    <location>
        <begin position="27"/>
        <end position="34"/>
    </location>
</feature>
<feature type="helix" evidence="24">
    <location>
        <begin position="38"/>
        <end position="51"/>
    </location>
</feature>
<feature type="strand" evidence="24">
    <location>
        <begin position="58"/>
        <end position="65"/>
    </location>
</feature>
<feature type="helix" evidence="24">
    <location>
        <begin position="70"/>
        <end position="83"/>
    </location>
</feature>
<feature type="strand" evidence="24">
    <location>
        <begin position="88"/>
        <end position="90"/>
    </location>
</feature>
<feature type="turn" evidence="24">
    <location>
        <begin position="94"/>
        <end position="96"/>
    </location>
</feature>
<feature type="helix" evidence="24">
    <location>
        <begin position="97"/>
        <end position="107"/>
    </location>
</feature>
<feature type="strand" evidence="24">
    <location>
        <begin position="111"/>
        <end position="113"/>
    </location>
</feature>
<feature type="strand" evidence="24">
    <location>
        <begin position="125"/>
        <end position="127"/>
    </location>
</feature>
<feature type="helix" evidence="24">
    <location>
        <begin position="133"/>
        <end position="142"/>
    </location>
</feature>
<feature type="strand" evidence="24">
    <location>
        <begin position="147"/>
        <end position="152"/>
    </location>
</feature>
<feature type="helix" evidence="24">
    <location>
        <begin position="159"/>
        <end position="171"/>
    </location>
</feature>
<feature type="strand" evidence="24">
    <location>
        <begin position="174"/>
        <end position="179"/>
    </location>
</feature>
<feature type="helix" evidence="24">
    <location>
        <begin position="188"/>
        <end position="191"/>
    </location>
</feature>
<feature type="helix" evidence="24">
    <location>
        <begin position="193"/>
        <end position="201"/>
    </location>
</feature>
<feature type="strand" evidence="24">
    <location>
        <begin position="206"/>
        <end position="211"/>
    </location>
</feature>
<feature type="helix" evidence="24">
    <location>
        <begin position="213"/>
        <end position="225"/>
    </location>
</feature>
<feature type="helix" evidence="24">
    <location>
        <begin position="230"/>
        <end position="232"/>
    </location>
</feature>
<feature type="strand" evidence="24">
    <location>
        <begin position="234"/>
        <end position="237"/>
    </location>
</feature>
<feature type="strand" evidence="24">
    <location>
        <begin position="239"/>
        <end position="241"/>
    </location>
</feature>
<feature type="helix" evidence="24">
    <location>
        <begin position="247"/>
        <end position="249"/>
    </location>
</feature>
<feature type="strand" evidence="24">
    <location>
        <begin position="256"/>
        <end position="262"/>
    </location>
</feature>
<feature type="helix" evidence="24">
    <location>
        <begin position="268"/>
        <end position="277"/>
    </location>
</feature>
<feature type="turn" evidence="24">
    <location>
        <begin position="282"/>
        <end position="284"/>
    </location>
</feature>
<feature type="strand" evidence="24">
    <location>
        <begin position="289"/>
        <end position="291"/>
    </location>
</feature>
<feature type="helix" evidence="24">
    <location>
        <begin position="295"/>
        <end position="316"/>
    </location>
</feature>
<feature type="helix" evidence="24">
    <location>
        <begin position="341"/>
        <end position="349"/>
    </location>
</feature>
<feature type="strand" evidence="24">
    <location>
        <begin position="353"/>
        <end position="355"/>
    </location>
</feature>
<feature type="strand" evidence="24">
    <location>
        <begin position="358"/>
        <end position="360"/>
    </location>
</feature>
<feature type="strand" evidence="24">
    <location>
        <begin position="366"/>
        <end position="368"/>
    </location>
</feature>
<feature type="strand" evidence="24">
    <location>
        <begin position="373"/>
        <end position="379"/>
    </location>
</feature>
<feature type="strand" evidence="24">
    <location>
        <begin position="382"/>
        <end position="390"/>
    </location>
</feature>
<feature type="turn" evidence="24">
    <location>
        <begin position="391"/>
        <end position="393"/>
    </location>
</feature>
<feature type="strand" evidence="24">
    <location>
        <begin position="394"/>
        <end position="397"/>
    </location>
</feature>
<feature type="strand" evidence="25">
    <location>
        <begin position="416"/>
        <end position="420"/>
    </location>
</feature>
<feature type="turn" evidence="25">
    <location>
        <begin position="424"/>
        <end position="426"/>
    </location>
</feature>
<feature type="strand" evidence="25">
    <location>
        <begin position="427"/>
        <end position="429"/>
    </location>
</feature>
<feature type="helix" evidence="25">
    <location>
        <begin position="433"/>
        <end position="435"/>
    </location>
</feature>
<feature type="helix" evidence="25">
    <location>
        <begin position="438"/>
        <end position="441"/>
    </location>
</feature>
<feature type="strand" evidence="25">
    <location>
        <begin position="442"/>
        <end position="444"/>
    </location>
</feature>
<feature type="helix" evidence="25">
    <location>
        <begin position="445"/>
        <end position="457"/>
    </location>
</feature>
<feature type="strand" evidence="25">
    <location>
        <begin position="461"/>
        <end position="465"/>
    </location>
</feature>
<feature type="turn" evidence="25">
    <location>
        <begin position="476"/>
        <end position="478"/>
    </location>
</feature>
<feature type="helix" evidence="25">
    <location>
        <begin position="483"/>
        <end position="489"/>
    </location>
</feature>
<feature type="strand" evidence="25">
    <location>
        <begin position="494"/>
        <end position="501"/>
    </location>
</feature>
<feature type="helix" evidence="25">
    <location>
        <begin position="504"/>
        <end position="507"/>
    </location>
</feature>
<feature type="strand" evidence="25">
    <location>
        <begin position="510"/>
        <end position="512"/>
    </location>
</feature>
<feature type="strand" evidence="25">
    <location>
        <begin position="516"/>
        <end position="519"/>
    </location>
</feature>
<feature type="strand" evidence="25">
    <location>
        <begin position="521"/>
        <end position="526"/>
    </location>
</feature>
<feature type="helix" evidence="25">
    <location>
        <begin position="657"/>
        <end position="661"/>
    </location>
</feature>
<feature type="strand" evidence="25">
    <location>
        <begin position="664"/>
        <end position="669"/>
    </location>
</feature>
<feature type="strand" evidence="25">
    <location>
        <begin position="671"/>
        <end position="674"/>
    </location>
</feature>
<feature type="helix" evidence="25">
    <location>
        <begin position="675"/>
        <end position="682"/>
    </location>
</feature>
<feature type="helix" evidence="25">
    <location>
        <begin position="686"/>
        <end position="697"/>
    </location>
</feature>
<feature type="strand" evidence="25">
    <location>
        <begin position="704"/>
        <end position="706"/>
    </location>
</feature>
<feature type="helix" evidence="25">
    <location>
        <begin position="707"/>
        <end position="716"/>
    </location>
</feature>
<feature type="turn" evidence="25">
    <location>
        <begin position="717"/>
        <end position="719"/>
    </location>
</feature>
<feature type="strand" evidence="25">
    <location>
        <begin position="721"/>
        <end position="726"/>
    </location>
</feature>
<feature type="helix" evidence="25">
    <location>
        <begin position="727"/>
        <end position="734"/>
    </location>
</feature>
<feature type="strand" evidence="25">
    <location>
        <begin position="741"/>
        <end position="745"/>
    </location>
</feature>
<feature type="strand" evidence="25">
    <location>
        <begin position="751"/>
        <end position="758"/>
    </location>
</feature>
<feature type="helix" evidence="25">
    <location>
        <begin position="764"/>
        <end position="776"/>
    </location>
</feature>
<feature type="helix" evidence="25">
    <location>
        <begin position="779"/>
        <end position="788"/>
    </location>
</feature>
<feature type="turn" evidence="25">
    <location>
        <begin position="789"/>
        <end position="791"/>
    </location>
</feature>
<organism>
    <name type="scientific">Homo sapiens</name>
    <name type="common">Human</name>
    <dbReference type="NCBI Taxonomy" id="9606"/>
    <lineage>
        <taxon>Eukaryota</taxon>
        <taxon>Metazoa</taxon>
        <taxon>Chordata</taxon>
        <taxon>Craniata</taxon>
        <taxon>Vertebrata</taxon>
        <taxon>Euteleostomi</taxon>
        <taxon>Mammalia</taxon>
        <taxon>Eutheria</taxon>
        <taxon>Euarchontoglires</taxon>
        <taxon>Primates</taxon>
        <taxon>Haplorrhini</taxon>
        <taxon>Catarrhini</taxon>
        <taxon>Hominidae</taxon>
        <taxon>Homo</taxon>
    </lineage>
</organism>
<keyword id="KW-0002">3D-structure</keyword>
<keyword id="KW-0025">Alternative splicing</keyword>
<keyword id="KW-1268">Autism spectrum disorder</keyword>
<keyword id="KW-1003">Cell membrane</keyword>
<keyword id="KW-0225">Disease variant</keyword>
<keyword id="KW-1015">Disulfide bond</keyword>
<keyword id="KW-0887">Epilepsy</keyword>
<keyword id="KW-0325">Glycoprotein</keyword>
<keyword id="KW-0991">Intellectual disability</keyword>
<keyword id="KW-0407">Ion channel</keyword>
<keyword id="KW-0406">Ion transport</keyword>
<keyword id="KW-1071">Ligand-gated ion channel</keyword>
<keyword id="KW-0449">Lipoprotein</keyword>
<keyword id="KW-0472">Membrane</keyword>
<keyword id="KW-0564">Palmitate</keyword>
<keyword id="KW-0597">Phosphoprotein</keyword>
<keyword id="KW-0628">Postsynaptic cell membrane</keyword>
<keyword id="KW-1267">Proteomics identification</keyword>
<keyword id="KW-0675">Receptor</keyword>
<keyword id="KW-1185">Reference proteome</keyword>
<keyword id="KW-0691">RNA editing</keyword>
<keyword id="KW-0732">Signal</keyword>
<keyword id="KW-0770">Synapse</keyword>
<keyword id="KW-0812">Transmembrane</keyword>
<keyword id="KW-1133">Transmembrane helix</keyword>
<keyword id="KW-0813">Transport</keyword>
<keyword id="KW-0832">Ubl conjugation</keyword>